<reference key="1">
    <citation type="journal article" date="1994" name="Nature">
        <title>Complete DNA sequence of yeast chromosome XI.</title>
        <authorList>
            <person name="Dujon B."/>
            <person name="Alexandraki D."/>
            <person name="Andre B."/>
            <person name="Ansorge W."/>
            <person name="Baladron V."/>
            <person name="Ballesta J.P.G."/>
            <person name="Banrevi A."/>
            <person name="Bolle P.-A."/>
            <person name="Bolotin-Fukuhara M."/>
            <person name="Bossier P."/>
            <person name="Bou G."/>
            <person name="Boyer J."/>
            <person name="Buitrago M.J."/>
            <person name="Cheret G."/>
            <person name="Colleaux L."/>
            <person name="Daignan-Fornier B."/>
            <person name="del Rey F."/>
            <person name="Dion C."/>
            <person name="Domdey H."/>
            <person name="Duesterhoeft A."/>
            <person name="Duesterhus S."/>
            <person name="Entian K.-D."/>
            <person name="Erfle H."/>
            <person name="Esteban P.F."/>
            <person name="Feldmann H."/>
            <person name="Fernandes L."/>
            <person name="Fobo G.M."/>
            <person name="Fritz C."/>
            <person name="Fukuhara H."/>
            <person name="Gabel C."/>
            <person name="Gaillon L."/>
            <person name="Garcia-Cantalejo J.M."/>
            <person name="Garcia-Ramirez J.J."/>
            <person name="Gent M.E."/>
            <person name="Ghazvini M."/>
            <person name="Goffeau A."/>
            <person name="Gonzalez A."/>
            <person name="Grothues D."/>
            <person name="Guerreiro P."/>
            <person name="Hegemann J.H."/>
            <person name="Hewitt N."/>
            <person name="Hilger F."/>
            <person name="Hollenberg C.P."/>
            <person name="Horaitis O."/>
            <person name="Indge K.J."/>
            <person name="Jacquier A."/>
            <person name="James C.M."/>
            <person name="Jauniaux J.-C."/>
            <person name="Jimenez A."/>
            <person name="Keuchel H."/>
            <person name="Kirchrath L."/>
            <person name="Kleine K."/>
            <person name="Koetter P."/>
            <person name="Legrain P."/>
            <person name="Liebl S."/>
            <person name="Louis E.J."/>
            <person name="Maia e Silva A."/>
            <person name="Marck C."/>
            <person name="Monnier A.-L."/>
            <person name="Moestl D."/>
            <person name="Mueller S."/>
            <person name="Obermaier B."/>
            <person name="Oliver S.G."/>
            <person name="Pallier C."/>
            <person name="Pascolo S."/>
            <person name="Pfeiffer F."/>
            <person name="Philippsen P."/>
            <person name="Planta R.J."/>
            <person name="Pohl F.M."/>
            <person name="Pohl T.M."/>
            <person name="Poehlmann R."/>
            <person name="Portetelle D."/>
            <person name="Purnelle B."/>
            <person name="Puzos V."/>
            <person name="Ramezani Rad M."/>
            <person name="Rasmussen S.W."/>
            <person name="Remacha M.A."/>
            <person name="Revuelta J.L."/>
            <person name="Richard G.-F."/>
            <person name="Rieger M."/>
            <person name="Rodrigues-Pousada C."/>
            <person name="Rose M."/>
            <person name="Rupp T."/>
            <person name="Santos M.A."/>
            <person name="Schwager C."/>
            <person name="Sensen C."/>
            <person name="Skala J."/>
            <person name="Soares H."/>
            <person name="Sor F."/>
            <person name="Stegemann J."/>
            <person name="Tettelin H."/>
            <person name="Thierry A."/>
            <person name="Tzermia M."/>
            <person name="Urrestarazu L.A."/>
            <person name="van Dyck L."/>
            <person name="van Vliet-Reedijk J.C."/>
            <person name="Valens M."/>
            <person name="Vandenbol M."/>
            <person name="Vilela C."/>
            <person name="Vissers S."/>
            <person name="von Wettstein D."/>
            <person name="Voss H."/>
            <person name="Wiemann S."/>
            <person name="Xu G."/>
            <person name="Zimmermann J."/>
            <person name="Haasemann M."/>
            <person name="Becker I."/>
            <person name="Mewes H.-W."/>
        </authorList>
    </citation>
    <scope>NUCLEOTIDE SEQUENCE [LARGE SCALE GENOMIC DNA]</scope>
    <source>
        <strain>ATCC 204508 / S288c</strain>
    </source>
</reference>
<reference key="2">
    <citation type="journal article" date="2014" name="G3 (Bethesda)">
        <title>The reference genome sequence of Saccharomyces cerevisiae: Then and now.</title>
        <authorList>
            <person name="Engel S.R."/>
            <person name="Dietrich F.S."/>
            <person name="Fisk D.G."/>
            <person name="Binkley G."/>
            <person name="Balakrishnan R."/>
            <person name="Costanzo M.C."/>
            <person name="Dwight S.S."/>
            <person name="Hitz B.C."/>
            <person name="Karra K."/>
            <person name="Nash R.S."/>
            <person name="Weng S."/>
            <person name="Wong E.D."/>
            <person name="Lloyd P."/>
            <person name="Skrzypek M.S."/>
            <person name="Miyasato S.R."/>
            <person name="Simison M."/>
            <person name="Cherry J.M."/>
        </authorList>
    </citation>
    <scope>GENOME REANNOTATION</scope>
    <source>
        <strain>ATCC 204508 / S288c</strain>
    </source>
</reference>
<reference key="3">
    <citation type="journal article" date="2007" name="Genome Res.">
        <title>Approaching a complete repository of sequence-verified protein-encoding clones for Saccharomyces cerevisiae.</title>
        <authorList>
            <person name="Hu Y."/>
            <person name="Rolfs A."/>
            <person name="Bhullar B."/>
            <person name="Murthy T.V.S."/>
            <person name="Zhu C."/>
            <person name="Berger M.F."/>
            <person name="Camargo A.A."/>
            <person name="Kelley F."/>
            <person name="McCarron S."/>
            <person name="Jepson D."/>
            <person name="Richardson A."/>
            <person name="Raphael J."/>
            <person name="Moreira D."/>
            <person name="Taycher E."/>
            <person name="Zuo D."/>
            <person name="Mohr S."/>
            <person name="Kane M.F."/>
            <person name="Williamson J."/>
            <person name="Simpson A.J.G."/>
            <person name="Bulyk M.L."/>
            <person name="Harlow E."/>
            <person name="Marsischky G."/>
            <person name="Kolodner R.D."/>
            <person name="LaBaer J."/>
        </authorList>
    </citation>
    <scope>NUCLEOTIDE SEQUENCE [GENOMIC DNA]</scope>
    <source>
        <strain>ATCC 204508 / S288c</strain>
    </source>
</reference>
<comment type="interaction">
    <interactant intactId="EBI-26441">
        <id>P36140</id>
    </interactant>
    <interactant intactId="EBI-16219">
        <id>P39940</id>
        <label>RSP5</label>
    </interactant>
    <organismsDiffer>false</organismsDiffer>
    <experiments>2</experiments>
</comment>
<comment type="miscellaneous">
    <text evidence="1">Partially overlaps NAP1.</text>
</comment>
<comment type="caution">
    <text evidence="2">Product of a dubious gene prediction unlikely to encode a functional protein. Because of that it is not part of the S.cerevisiae S288c complete/reference proteome set.</text>
</comment>
<gene>
    <name type="ordered locus">YKR047W</name>
</gene>
<accession>P36140</accession>
<organism>
    <name type="scientific">Saccharomyces cerevisiae (strain ATCC 204508 / S288c)</name>
    <name type="common">Baker's yeast</name>
    <dbReference type="NCBI Taxonomy" id="559292"/>
    <lineage>
        <taxon>Eukaryota</taxon>
        <taxon>Fungi</taxon>
        <taxon>Dikarya</taxon>
        <taxon>Ascomycota</taxon>
        <taxon>Saccharomycotina</taxon>
        <taxon>Saccharomycetes</taxon>
        <taxon>Saccharomycetales</taxon>
        <taxon>Saccharomycetaceae</taxon>
        <taxon>Saccharomyces</taxon>
    </lineage>
</organism>
<proteinExistence type="uncertain"/>
<name>YK27_YEAST</name>
<protein>
    <recommendedName>
        <fullName>Putative uncharacterized protein YKR047W</fullName>
    </recommendedName>
</protein>
<evidence type="ECO:0000305" key="1"/>
<evidence type="ECO:0000305" key="2">
    <source>
    </source>
</evidence>
<feature type="chain" id="PRO_0000203214" description="Putative uncharacterized protein YKR047W">
    <location>
        <begin position="1"/>
        <end position="101"/>
    </location>
</feature>
<dbReference type="EMBL" id="Z28272">
    <property type="protein sequence ID" value="CAA82123.1"/>
    <property type="molecule type" value="Genomic_DNA"/>
</dbReference>
<dbReference type="EMBL" id="Z28273">
    <property type="protein sequence ID" value="CAA82126.1"/>
    <property type="molecule type" value="Genomic_DNA"/>
</dbReference>
<dbReference type="EMBL" id="AY558362">
    <property type="protein sequence ID" value="AAS56688.1"/>
    <property type="molecule type" value="Genomic_DNA"/>
</dbReference>
<dbReference type="PIR" id="S38121">
    <property type="entry name" value="S38121"/>
</dbReference>
<dbReference type="SMR" id="P36140"/>
<dbReference type="IntAct" id="P36140">
    <property type="interactions" value="2"/>
</dbReference>
<dbReference type="PaxDb" id="4932-YKR047W"/>
<dbReference type="EnsemblFungi" id="YKR047W_mRNA">
    <property type="protein sequence ID" value="YKR047W"/>
    <property type="gene ID" value="YKR047W"/>
</dbReference>
<dbReference type="AGR" id="SGD:S000001755"/>
<dbReference type="SGD" id="S000001755">
    <property type="gene designation" value="YKR047W"/>
</dbReference>
<dbReference type="HOGENOM" id="CLU_2293903_0_0_1"/>
<sequence length="101" mass="12332">MRFNIYFSLHTYMYIHIYIYICMYTYVYKYMNTVMTTLAKCVGIMTACIQEPVPACQQNRLALRQIPRRHPPSRDHHLLLRLRPRPLLLRPPRTRIPRLRR</sequence>